<name>XYNB_DICB4</name>
<feature type="chain" id="PRO_0000184064" description="Endo-1,4-beta-xylanase B">
    <location>
        <begin position="1"/>
        <end position="10" status="greater than"/>
    </location>
</feature>
<feature type="non-terminal residue">
    <location>
        <position position="10"/>
    </location>
</feature>
<reference key="1">
    <citation type="submission" date="1996-10" db="UniProtKB">
        <authorList>
            <person name="Adamsen A.K."/>
            <person name="Jacobsen S."/>
            <person name="Ahring B.K."/>
        </authorList>
    </citation>
    <scope>PROTEIN SEQUENCE</scope>
</reference>
<comment type="catalytic activity">
    <reaction>
        <text>Endohydrolysis of (1-&gt;4)-beta-D-xylosidic linkages in xylans.</text>
        <dbReference type="EC" id="3.2.1.8"/>
    </reaction>
</comment>
<comment type="pathway">
    <text>Glycan degradation; xylan degradation.</text>
</comment>
<comment type="similarity">
    <text evidence="1">Belongs to the glycosyl hydrolase 10 (cellulase F) family.</text>
</comment>
<dbReference type="EC" id="3.2.1.8"/>
<dbReference type="UniPathway" id="UPA00114"/>
<dbReference type="GO" id="GO:0031176">
    <property type="term" value="F:endo-1,4-beta-xylanase activity"/>
    <property type="evidence" value="ECO:0007669"/>
    <property type="project" value="UniProtKB-EC"/>
</dbReference>
<dbReference type="GO" id="GO:0045493">
    <property type="term" value="P:xylan catabolic process"/>
    <property type="evidence" value="ECO:0007669"/>
    <property type="project" value="UniProtKB-UniPathway"/>
</dbReference>
<organism>
    <name type="scientific">Dictyoglomus sp. (strain B4A)</name>
    <dbReference type="NCBI Taxonomy" id="69007"/>
    <lineage>
        <taxon>Bacteria</taxon>
        <taxon>Pseudomonadati</taxon>
        <taxon>Dictyoglomota</taxon>
        <taxon>Dictyoglomia</taxon>
        <taxon>Dictyoglomales</taxon>
        <taxon>Dictyoglomaceae</taxon>
        <taxon>Dictyoglomus</taxon>
    </lineage>
</organism>
<accession>P80717</accession>
<evidence type="ECO:0000305" key="1"/>
<sequence length="10" mass="1144">AKKTILDLKD</sequence>
<proteinExistence type="evidence at protein level"/>
<protein>
    <recommendedName>
        <fullName>Endo-1,4-beta-xylanase B</fullName>
        <shortName>Xylanase B</shortName>
        <ecNumber>3.2.1.8</ecNumber>
    </recommendedName>
    <alternativeName>
        <fullName>1,4-beta-D-xylan xylanohydrolase B</fullName>
    </alternativeName>
</protein>
<keyword id="KW-0119">Carbohydrate metabolism</keyword>
<keyword id="KW-0903">Direct protein sequencing</keyword>
<keyword id="KW-0326">Glycosidase</keyword>
<keyword id="KW-0378">Hydrolase</keyword>
<keyword id="KW-0624">Polysaccharide degradation</keyword>
<keyword id="KW-0858">Xylan degradation</keyword>